<sequence>MPRVALYNIQGQQVGEVDLDDSVFGGEVNEAVLHDAVVMQLASRRRGTAATRGWADVSGGGRKPWRQKGTGRARAGSIRSPLWRGGAVIFGPQPRDYGYRLPKKVRRLALRSALASKVRDGNIIVLDELKMEKPRTKDMAHILKNLNAENKALVVTATREPNVELSARNLPGVRFLTSDGINVYDLLAHDKLVITKDAVARVQEVLA</sequence>
<keyword id="KW-0687">Ribonucleoprotein</keyword>
<keyword id="KW-0689">Ribosomal protein</keyword>
<keyword id="KW-0694">RNA-binding</keyword>
<keyword id="KW-0699">rRNA-binding</keyword>
<reference key="1">
    <citation type="journal article" date="2008" name="Environ. Microbiol.">
        <title>The complete genome sequence of Moorella thermoacetica (f. Clostridium thermoaceticum).</title>
        <authorList>
            <person name="Pierce E."/>
            <person name="Xie G."/>
            <person name="Barabote R.D."/>
            <person name="Saunders E."/>
            <person name="Han C.S."/>
            <person name="Detter J.C."/>
            <person name="Richardson P."/>
            <person name="Brettin T.S."/>
            <person name="Das A."/>
            <person name="Ljungdahl L.G."/>
            <person name="Ragsdale S.W."/>
        </authorList>
    </citation>
    <scope>NUCLEOTIDE SEQUENCE [LARGE SCALE GENOMIC DNA]</scope>
    <source>
        <strain>ATCC 39073 / JCM 9320</strain>
    </source>
</reference>
<accession>Q2RFP8</accession>
<evidence type="ECO:0000255" key="1">
    <source>
        <dbReference type="HAMAP-Rule" id="MF_01328"/>
    </source>
</evidence>
<evidence type="ECO:0000256" key="2">
    <source>
        <dbReference type="SAM" id="MobiDB-lite"/>
    </source>
</evidence>
<evidence type="ECO:0000305" key="3"/>
<organism>
    <name type="scientific">Moorella thermoacetica (strain ATCC 39073 / JCM 9320)</name>
    <dbReference type="NCBI Taxonomy" id="264732"/>
    <lineage>
        <taxon>Bacteria</taxon>
        <taxon>Bacillati</taxon>
        <taxon>Bacillota</taxon>
        <taxon>Clostridia</taxon>
        <taxon>Moorellales</taxon>
        <taxon>Moorellaceae</taxon>
        <taxon>Moorella</taxon>
    </lineage>
</organism>
<proteinExistence type="inferred from homology"/>
<gene>
    <name evidence="1" type="primary">rplD</name>
    <name type="ordered locus">Moth_2459</name>
</gene>
<feature type="chain" id="PRO_0000242395" description="Large ribosomal subunit protein uL4">
    <location>
        <begin position="1"/>
        <end position="207"/>
    </location>
</feature>
<feature type="region of interest" description="Disordered" evidence="2">
    <location>
        <begin position="52"/>
        <end position="77"/>
    </location>
</feature>
<protein>
    <recommendedName>
        <fullName evidence="1">Large ribosomal subunit protein uL4</fullName>
    </recommendedName>
    <alternativeName>
        <fullName evidence="3">50S ribosomal protein L4</fullName>
    </alternativeName>
</protein>
<name>RL4_MOOTA</name>
<dbReference type="EMBL" id="CP000232">
    <property type="protein sequence ID" value="ABC20741.1"/>
    <property type="molecule type" value="Genomic_DNA"/>
</dbReference>
<dbReference type="RefSeq" id="YP_431284.1">
    <property type="nucleotide sequence ID" value="NC_007644.1"/>
</dbReference>
<dbReference type="SMR" id="Q2RFP8"/>
<dbReference type="STRING" id="264732.Moth_2459"/>
<dbReference type="EnsemblBacteria" id="ABC20741">
    <property type="protein sequence ID" value="ABC20741"/>
    <property type="gene ID" value="Moth_2459"/>
</dbReference>
<dbReference type="KEGG" id="mta:Moth_2459"/>
<dbReference type="PATRIC" id="fig|264732.11.peg.2677"/>
<dbReference type="eggNOG" id="COG0088">
    <property type="taxonomic scope" value="Bacteria"/>
</dbReference>
<dbReference type="HOGENOM" id="CLU_041575_5_2_9"/>
<dbReference type="OrthoDB" id="9803201at2"/>
<dbReference type="GO" id="GO:1990904">
    <property type="term" value="C:ribonucleoprotein complex"/>
    <property type="evidence" value="ECO:0007669"/>
    <property type="project" value="UniProtKB-KW"/>
</dbReference>
<dbReference type="GO" id="GO:0005840">
    <property type="term" value="C:ribosome"/>
    <property type="evidence" value="ECO:0007669"/>
    <property type="project" value="UniProtKB-KW"/>
</dbReference>
<dbReference type="GO" id="GO:0019843">
    <property type="term" value="F:rRNA binding"/>
    <property type="evidence" value="ECO:0007669"/>
    <property type="project" value="UniProtKB-UniRule"/>
</dbReference>
<dbReference type="GO" id="GO:0003735">
    <property type="term" value="F:structural constituent of ribosome"/>
    <property type="evidence" value="ECO:0007669"/>
    <property type="project" value="InterPro"/>
</dbReference>
<dbReference type="GO" id="GO:0006412">
    <property type="term" value="P:translation"/>
    <property type="evidence" value="ECO:0007669"/>
    <property type="project" value="UniProtKB-UniRule"/>
</dbReference>
<dbReference type="Gene3D" id="3.40.1370.10">
    <property type="match status" value="1"/>
</dbReference>
<dbReference type="HAMAP" id="MF_01328_B">
    <property type="entry name" value="Ribosomal_uL4_B"/>
    <property type="match status" value="1"/>
</dbReference>
<dbReference type="InterPro" id="IPR002136">
    <property type="entry name" value="Ribosomal_uL4"/>
</dbReference>
<dbReference type="InterPro" id="IPR013005">
    <property type="entry name" value="Ribosomal_uL4-like"/>
</dbReference>
<dbReference type="InterPro" id="IPR023574">
    <property type="entry name" value="Ribosomal_uL4_dom_sf"/>
</dbReference>
<dbReference type="NCBIfam" id="TIGR03953">
    <property type="entry name" value="rplD_bact"/>
    <property type="match status" value="1"/>
</dbReference>
<dbReference type="PANTHER" id="PTHR10746">
    <property type="entry name" value="50S RIBOSOMAL PROTEIN L4"/>
    <property type="match status" value="1"/>
</dbReference>
<dbReference type="PANTHER" id="PTHR10746:SF6">
    <property type="entry name" value="LARGE RIBOSOMAL SUBUNIT PROTEIN UL4M"/>
    <property type="match status" value="1"/>
</dbReference>
<dbReference type="Pfam" id="PF00573">
    <property type="entry name" value="Ribosomal_L4"/>
    <property type="match status" value="1"/>
</dbReference>
<dbReference type="SUPFAM" id="SSF52166">
    <property type="entry name" value="Ribosomal protein L4"/>
    <property type="match status" value="1"/>
</dbReference>
<comment type="function">
    <text evidence="1">One of the primary rRNA binding proteins, this protein initially binds near the 5'-end of the 23S rRNA. It is important during the early stages of 50S assembly. It makes multiple contacts with different domains of the 23S rRNA in the assembled 50S subunit and ribosome.</text>
</comment>
<comment type="function">
    <text evidence="1">Forms part of the polypeptide exit tunnel.</text>
</comment>
<comment type="subunit">
    <text evidence="1">Part of the 50S ribosomal subunit.</text>
</comment>
<comment type="similarity">
    <text evidence="1">Belongs to the universal ribosomal protein uL4 family.</text>
</comment>